<proteinExistence type="inferred from homology"/>
<protein>
    <recommendedName>
        <fullName evidence="1">Tryptophan synthase alpha chain</fullName>
        <ecNumber evidence="1">4.2.1.20</ecNumber>
    </recommendedName>
</protein>
<sequence>MTKDRIDRRFAALKAENRAGFVTYVMAGDPDAATTLSVLKGLPAAGADLIELGFPFSDPMAEGPTIQRAAQRGLKSGMTLQGTLDLVAAFREGDQDTPIILMGYLNPVLNKGFETFAALAAKAGVDGLIIVDCPPEEADPLSDALEAEGIALIRLAAPTTDDARLPMVVRRTSGFVYYVSVAGVTGVKSADAADVAPAVERLRKASGLPVAVGFGIRTPDQAAAVAKVADAAVVGSALVDEIESAAQLNENVTEKVLLKASELAKAVRSARVGTK</sequence>
<keyword id="KW-0028">Amino-acid biosynthesis</keyword>
<keyword id="KW-0057">Aromatic amino acid biosynthesis</keyword>
<keyword id="KW-0456">Lyase</keyword>
<keyword id="KW-1185">Reference proteome</keyword>
<keyword id="KW-0822">Tryptophan biosynthesis</keyword>
<evidence type="ECO:0000255" key="1">
    <source>
        <dbReference type="HAMAP-Rule" id="MF_00131"/>
    </source>
</evidence>
<feature type="chain" id="PRO_1000198704" description="Tryptophan synthase alpha chain">
    <location>
        <begin position="1"/>
        <end position="275"/>
    </location>
</feature>
<feature type="active site" description="Proton acceptor" evidence="1">
    <location>
        <position position="51"/>
    </location>
</feature>
<feature type="active site" description="Proton acceptor" evidence="1">
    <location>
        <position position="62"/>
    </location>
</feature>
<accession>B8H661</accession>
<dbReference type="EC" id="4.2.1.20" evidence="1"/>
<dbReference type="EMBL" id="CP001340">
    <property type="protein sequence ID" value="ACL97122.1"/>
    <property type="molecule type" value="Genomic_DNA"/>
</dbReference>
<dbReference type="RefSeq" id="WP_010921372.1">
    <property type="nucleotide sequence ID" value="NC_011916.1"/>
</dbReference>
<dbReference type="RefSeq" id="YP_002519030.1">
    <property type="nucleotide sequence ID" value="NC_011916.1"/>
</dbReference>
<dbReference type="SMR" id="B8H661"/>
<dbReference type="GeneID" id="7329748"/>
<dbReference type="KEGG" id="ccs:CCNA_03657"/>
<dbReference type="PATRIC" id="fig|565050.3.peg.3566"/>
<dbReference type="HOGENOM" id="CLU_016734_0_0_5"/>
<dbReference type="OrthoDB" id="9804578at2"/>
<dbReference type="PhylomeDB" id="B8H661"/>
<dbReference type="UniPathway" id="UPA00035">
    <property type="reaction ID" value="UER00044"/>
</dbReference>
<dbReference type="Proteomes" id="UP000001364">
    <property type="component" value="Chromosome"/>
</dbReference>
<dbReference type="GO" id="GO:0005829">
    <property type="term" value="C:cytosol"/>
    <property type="evidence" value="ECO:0007669"/>
    <property type="project" value="TreeGrafter"/>
</dbReference>
<dbReference type="GO" id="GO:0004834">
    <property type="term" value="F:tryptophan synthase activity"/>
    <property type="evidence" value="ECO:0007669"/>
    <property type="project" value="UniProtKB-UniRule"/>
</dbReference>
<dbReference type="CDD" id="cd04724">
    <property type="entry name" value="Tryptophan_synthase_alpha"/>
    <property type="match status" value="1"/>
</dbReference>
<dbReference type="FunFam" id="3.20.20.70:FF:000037">
    <property type="entry name" value="Tryptophan synthase alpha chain"/>
    <property type="match status" value="1"/>
</dbReference>
<dbReference type="Gene3D" id="3.20.20.70">
    <property type="entry name" value="Aldolase class I"/>
    <property type="match status" value="1"/>
</dbReference>
<dbReference type="HAMAP" id="MF_00131">
    <property type="entry name" value="Trp_synth_alpha"/>
    <property type="match status" value="1"/>
</dbReference>
<dbReference type="InterPro" id="IPR013785">
    <property type="entry name" value="Aldolase_TIM"/>
</dbReference>
<dbReference type="InterPro" id="IPR011060">
    <property type="entry name" value="RibuloseP-bd_barrel"/>
</dbReference>
<dbReference type="InterPro" id="IPR018204">
    <property type="entry name" value="Trp_synthase_alpha_AS"/>
</dbReference>
<dbReference type="InterPro" id="IPR002028">
    <property type="entry name" value="Trp_synthase_suA"/>
</dbReference>
<dbReference type="NCBIfam" id="TIGR00262">
    <property type="entry name" value="trpA"/>
    <property type="match status" value="1"/>
</dbReference>
<dbReference type="PANTHER" id="PTHR43406:SF1">
    <property type="entry name" value="TRYPTOPHAN SYNTHASE ALPHA CHAIN, CHLOROPLASTIC"/>
    <property type="match status" value="1"/>
</dbReference>
<dbReference type="PANTHER" id="PTHR43406">
    <property type="entry name" value="TRYPTOPHAN SYNTHASE, ALPHA CHAIN"/>
    <property type="match status" value="1"/>
</dbReference>
<dbReference type="Pfam" id="PF00290">
    <property type="entry name" value="Trp_syntA"/>
    <property type="match status" value="1"/>
</dbReference>
<dbReference type="SUPFAM" id="SSF51366">
    <property type="entry name" value="Ribulose-phoshate binding barrel"/>
    <property type="match status" value="1"/>
</dbReference>
<dbReference type="PROSITE" id="PS00167">
    <property type="entry name" value="TRP_SYNTHASE_ALPHA"/>
    <property type="match status" value="1"/>
</dbReference>
<name>TRPA_CAUVN</name>
<organism>
    <name type="scientific">Caulobacter vibrioides (strain NA1000 / CB15N)</name>
    <name type="common">Caulobacter crescentus</name>
    <dbReference type="NCBI Taxonomy" id="565050"/>
    <lineage>
        <taxon>Bacteria</taxon>
        <taxon>Pseudomonadati</taxon>
        <taxon>Pseudomonadota</taxon>
        <taxon>Alphaproteobacteria</taxon>
        <taxon>Caulobacterales</taxon>
        <taxon>Caulobacteraceae</taxon>
        <taxon>Caulobacter</taxon>
    </lineage>
</organism>
<gene>
    <name evidence="1" type="primary">trpA</name>
    <name type="ordered locus">CCNA_03657</name>
</gene>
<comment type="function">
    <text evidence="1">The alpha subunit is responsible for the aldol cleavage of indoleglycerol phosphate to indole and glyceraldehyde 3-phosphate.</text>
</comment>
<comment type="catalytic activity">
    <reaction evidence="1">
        <text>(1S,2R)-1-C-(indol-3-yl)glycerol 3-phosphate + L-serine = D-glyceraldehyde 3-phosphate + L-tryptophan + H2O</text>
        <dbReference type="Rhea" id="RHEA:10532"/>
        <dbReference type="ChEBI" id="CHEBI:15377"/>
        <dbReference type="ChEBI" id="CHEBI:33384"/>
        <dbReference type="ChEBI" id="CHEBI:57912"/>
        <dbReference type="ChEBI" id="CHEBI:58866"/>
        <dbReference type="ChEBI" id="CHEBI:59776"/>
        <dbReference type="EC" id="4.2.1.20"/>
    </reaction>
</comment>
<comment type="pathway">
    <text evidence="1">Amino-acid biosynthesis; L-tryptophan biosynthesis; L-tryptophan from chorismate: step 5/5.</text>
</comment>
<comment type="subunit">
    <text evidence="1">Tetramer of two alpha and two beta chains.</text>
</comment>
<comment type="similarity">
    <text evidence="1">Belongs to the TrpA family.</text>
</comment>
<reference key="1">
    <citation type="journal article" date="2010" name="J. Bacteriol.">
        <title>The genetic basis of laboratory adaptation in Caulobacter crescentus.</title>
        <authorList>
            <person name="Marks M.E."/>
            <person name="Castro-Rojas C.M."/>
            <person name="Teiling C."/>
            <person name="Du L."/>
            <person name="Kapatral V."/>
            <person name="Walunas T.L."/>
            <person name="Crosson S."/>
        </authorList>
    </citation>
    <scope>NUCLEOTIDE SEQUENCE [LARGE SCALE GENOMIC DNA]</scope>
    <source>
        <strain>NA1000 / CB15N</strain>
    </source>
</reference>